<accession>Q57PU6</accession>
<gene>
    <name evidence="1" type="primary">btuC</name>
    <name type="ordered locus">SCH_1359</name>
</gene>
<keyword id="KW-0997">Cell inner membrane</keyword>
<keyword id="KW-1003">Cell membrane</keyword>
<keyword id="KW-0472">Membrane</keyword>
<keyword id="KW-0812">Transmembrane</keyword>
<keyword id="KW-1133">Transmembrane helix</keyword>
<keyword id="KW-0813">Transport</keyword>
<protein>
    <recommendedName>
        <fullName evidence="1">Vitamin B12 import system permease protein BtuC</fullName>
    </recommendedName>
</protein>
<reference key="1">
    <citation type="journal article" date="2005" name="Nucleic Acids Res.">
        <title>The genome sequence of Salmonella enterica serovar Choleraesuis, a highly invasive and resistant zoonotic pathogen.</title>
        <authorList>
            <person name="Chiu C.-H."/>
            <person name="Tang P."/>
            <person name="Chu C."/>
            <person name="Hu S."/>
            <person name="Bao Q."/>
            <person name="Yu J."/>
            <person name="Chou Y.-Y."/>
            <person name="Wang H.-S."/>
            <person name="Lee Y.-S."/>
        </authorList>
    </citation>
    <scope>NUCLEOTIDE SEQUENCE [LARGE SCALE GENOMIC DNA]</scope>
    <source>
        <strain>SC-B67</strain>
    </source>
</reference>
<proteinExistence type="inferred from homology"/>
<organism>
    <name type="scientific">Salmonella choleraesuis (strain SC-B67)</name>
    <dbReference type="NCBI Taxonomy" id="321314"/>
    <lineage>
        <taxon>Bacteria</taxon>
        <taxon>Pseudomonadati</taxon>
        <taxon>Pseudomonadota</taxon>
        <taxon>Gammaproteobacteria</taxon>
        <taxon>Enterobacterales</taxon>
        <taxon>Enterobacteriaceae</taxon>
        <taxon>Salmonella</taxon>
    </lineage>
</organism>
<name>BTUC_SALCH</name>
<evidence type="ECO:0000255" key="1">
    <source>
        <dbReference type="HAMAP-Rule" id="MF_01004"/>
    </source>
</evidence>
<feature type="chain" id="PRO_0000059974" description="Vitamin B12 import system permease protein BtuC">
    <location>
        <begin position="1"/>
        <end position="326"/>
    </location>
</feature>
<feature type="transmembrane region" description="Helical" evidence="1">
    <location>
        <begin position="15"/>
        <end position="35"/>
    </location>
</feature>
<feature type="transmembrane region" description="Helical" evidence="1">
    <location>
        <begin position="61"/>
        <end position="81"/>
    </location>
</feature>
<feature type="transmembrane region" description="Helical" evidence="1">
    <location>
        <begin position="88"/>
        <end position="108"/>
    </location>
</feature>
<feature type="transmembrane region" description="Helical" evidence="1">
    <location>
        <begin position="112"/>
        <end position="132"/>
    </location>
</feature>
<feature type="transmembrane region" description="Helical" evidence="1">
    <location>
        <begin position="146"/>
        <end position="166"/>
    </location>
</feature>
<feature type="transmembrane region" description="Helical" evidence="1">
    <location>
        <begin position="184"/>
        <end position="204"/>
    </location>
</feature>
<feature type="transmembrane region" description="Helical" evidence="1">
    <location>
        <begin position="240"/>
        <end position="260"/>
    </location>
</feature>
<feature type="transmembrane region" description="Helical" evidence="1">
    <location>
        <begin position="274"/>
        <end position="294"/>
    </location>
</feature>
<feature type="transmembrane region" description="Helical" evidence="1">
    <location>
        <begin position="302"/>
        <end position="322"/>
    </location>
</feature>
<dbReference type="EMBL" id="AE017220">
    <property type="protein sequence ID" value="AAX65265.1"/>
    <property type="molecule type" value="Genomic_DNA"/>
</dbReference>
<dbReference type="RefSeq" id="WP_000954987.1">
    <property type="nucleotide sequence ID" value="NC_006905.1"/>
</dbReference>
<dbReference type="SMR" id="Q57PU6"/>
<dbReference type="KEGG" id="sec:SCH_1359"/>
<dbReference type="HOGENOM" id="CLU_013016_0_3_6"/>
<dbReference type="Proteomes" id="UP000000538">
    <property type="component" value="Chromosome"/>
</dbReference>
<dbReference type="GO" id="GO:0005886">
    <property type="term" value="C:plasma membrane"/>
    <property type="evidence" value="ECO:0007669"/>
    <property type="project" value="UniProtKB-SubCell"/>
</dbReference>
<dbReference type="GO" id="GO:0090482">
    <property type="term" value="F:vitamin transmembrane transporter activity"/>
    <property type="evidence" value="ECO:0007669"/>
    <property type="project" value="UniProtKB-UniRule"/>
</dbReference>
<dbReference type="GO" id="GO:0015889">
    <property type="term" value="P:cobalamin transport"/>
    <property type="evidence" value="ECO:0007669"/>
    <property type="project" value="UniProtKB-UniRule"/>
</dbReference>
<dbReference type="CDD" id="cd06550">
    <property type="entry name" value="TM_ABC_iron-siderophores_like"/>
    <property type="match status" value="1"/>
</dbReference>
<dbReference type="FunFam" id="1.10.3470.10:FF:000001">
    <property type="entry name" value="Vitamin B12 ABC transporter permease BtuC"/>
    <property type="match status" value="1"/>
</dbReference>
<dbReference type="Gene3D" id="1.10.3470.10">
    <property type="entry name" value="ABC transporter involved in vitamin B12 uptake, BtuC"/>
    <property type="match status" value="1"/>
</dbReference>
<dbReference type="HAMAP" id="MF_01004">
    <property type="entry name" value="BtuC"/>
    <property type="match status" value="1"/>
</dbReference>
<dbReference type="InterPro" id="IPR037294">
    <property type="entry name" value="ABC_BtuC-like"/>
</dbReference>
<dbReference type="InterPro" id="IPR023691">
    <property type="entry name" value="ABC_transptr_BtuC"/>
</dbReference>
<dbReference type="InterPro" id="IPR000522">
    <property type="entry name" value="ABC_transptr_permease_BtuC"/>
</dbReference>
<dbReference type="NCBIfam" id="NF003001">
    <property type="entry name" value="PRK03784.1"/>
    <property type="match status" value="1"/>
</dbReference>
<dbReference type="PANTHER" id="PTHR30472">
    <property type="entry name" value="FERRIC ENTEROBACTIN TRANSPORT SYSTEM PERMEASE PROTEIN"/>
    <property type="match status" value="1"/>
</dbReference>
<dbReference type="PANTHER" id="PTHR30472:SF29">
    <property type="entry name" value="VITAMIN B12 IMPORT SYSTEM PERMEASE PROTEIN BTUC"/>
    <property type="match status" value="1"/>
</dbReference>
<dbReference type="Pfam" id="PF01032">
    <property type="entry name" value="FecCD"/>
    <property type="match status" value="1"/>
</dbReference>
<dbReference type="SUPFAM" id="SSF81345">
    <property type="entry name" value="ABC transporter involved in vitamin B12 uptake, BtuC"/>
    <property type="match status" value="1"/>
</dbReference>
<comment type="function">
    <text evidence="1">Part of the ABC transporter complex BtuCDF involved in vitamin B12 import. Involved in the translocation of the substrate across the membrane.</text>
</comment>
<comment type="subunit">
    <text evidence="1">The complex is composed of two ATP-binding proteins (BtuD), two transmembrane proteins (BtuC) and a solute-binding protein (BtuF).</text>
</comment>
<comment type="subcellular location">
    <subcellularLocation>
        <location evidence="1">Cell inner membrane</location>
        <topology evidence="1">Multi-pass membrane protein</topology>
    </subcellularLocation>
</comment>
<comment type="similarity">
    <text evidence="1">Belongs to the binding-protein-dependent transport system permease family. FecCD subfamily.</text>
</comment>
<sequence>MLTFARQQQRRNVRWLLSLSLLVLLATLLSLCAGEQWIAPGDWLSARGELFVWQIRLPRTLAVLLVGAALALSGAVMQALFENPLTEPGLLGVSNGAGVGLIAAVLLGQGQLPGWALGLCAIAGALIITLILLRFARRHLSTSRLLLAGVALGIICSALMTWAIYFSTSFDLRQLMYWMMGGFGGVDWQQSWLMIALIPVLIWICCQSQPLNMLALGETSARQLGLPLWFWRNLLVIATGWMVGVSVAMAGAIGFIGLVIPHILRLCGLTDHRVLLPGCALAGAIALLLADVVARLALASAELPIGVVTATLGAPVFIWLLLKSAR</sequence>